<name>O1638_CONCL</name>
<accession>P0DUA0</accession>
<feature type="signal peptide" evidence="1">
    <location>
        <begin position="1"/>
        <end position="22"/>
    </location>
</feature>
<feature type="chain" id="PRO_0000450982" description="Conotoxin Cal6.38" evidence="3">
    <location>
        <begin position="23"/>
        <end position="66"/>
    </location>
</feature>
<feature type="disulfide bond" evidence="3">
    <location>
        <begin position="38"/>
        <end position="55"/>
    </location>
</feature>
<feature type="disulfide bond" evidence="3">
    <location>
        <begin position="45"/>
        <end position="59"/>
    </location>
</feature>
<feature type="disulfide bond" evidence="3">
    <location>
        <begin position="54"/>
        <end position="64"/>
    </location>
</feature>
<sequence>MKLTFVLIVAVLVLAVCNFTVADKANNAEAPEQEKRACTPNGSYCNILSGKLNCCSGWCLALICAG</sequence>
<organism>
    <name type="scientific">Californiconus californicus</name>
    <name type="common">California cone</name>
    <name type="synonym">Conus californicus</name>
    <dbReference type="NCBI Taxonomy" id="1736779"/>
    <lineage>
        <taxon>Eukaryota</taxon>
        <taxon>Metazoa</taxon>
        <taxon>Spiralia</taxon>
        <taxon>Lophotrochozoa</taxon>
        <taxon>Mollusca</taxon>
        <taxon>Gastropoda</taxon>
        <taxon>Caenogastropoda</taxon>
        <taxon>Neogastropoda</taxon>
        <taxon>Conoidea</taxon>
        <taxon>Conidae</taxon>
        <taxon>Californiconus</taxon>
    </lineage>
</organism>
<protein>
    <recommendedName>
        <fullName evidence="3">Conotoxin Cal6.38</fullName>
    </recommendedName>
    <alternativeName>
        <fullName evidence="2">O1_cal6.38</fullName>
    </alternativeName>
</protein>
<reference key="1">
    <citation type="journal article" date="2019" name="Toxins">
        <title>The diversified O-superfamily in Californiconus californicus presents a conotoxin with antimycobacterial activity.</title>
        <authorList>
            <person name="Bernaldez-Sarabia J."/>
            <person name="Figueroa-Montiel A."/>
            <person name="Duenas S."/>
            <person name="Cervantes-Luevano K."/>
            <person name="Beltran J.A."/>
            <person name="Ortiz E."/>
            <person name="Jimenez S."/>
            <person name="Possani L.D."/>
            <person name="Paniagua-Solis J.F."/>
            <person name="Gonzalez-Canudas J."/>
            <person name="Licea-Navarro A."/>
        </authorList>
    </citation>
    <scope>NUCLEOTIDE SEQUENCE [MRNA]</scope>
    <source>
        <tissue>Venom duct</tissue>
    </source>
</reference>
<proteinExistence type="inferred from homology"/>
<evidence type="ECO:0000255" key="1"/>
<evidence type="ECO:0000303" key="2">
    <source>
    </source>
</evidence>
<evidence type="ECO:0000305" key="3"/>
<evidence type="ECO:0000305" key="4">
    <source>
    </source>
</evidence>
<keyword id="KW-1015">Disulfide bond</keyword>
<keyword id="KW-0960">Knottin</keyword>
<keyword id="KW-0528">Neurotoxin</keyword>
<keyword id="KW-0964">Secreted</keyword>
<keyword id="KW-0732">Signal</keyword>
<keyword id="KW-0800">Toxin</keyword>
<comment type="function">
    <text evidence="3">Probable neurotoxin.</text>
</comment>
<comment type="subcellular location">
    <subcellularLocation>
        <location evidence="4">Secreted</location>
    </subcellularLocation>
</comment>
<comment type="tissue specificity">
    <text evidence="4">Expressed by the venom duct.</text>
</comment>
<comment type="domain">
    <text evidence="3">The cysteine framework is VI/VII (C-C-CC-C-C).</text>
</comment>
<comment type="domain">
    <text evidence="3">The presence of a 'disulfide through disulfide knot' structurally defines this protein as a knottin.</text>
</comment>
<comment type="similarity">
    <text evidence="3">Belongs to the conotoxin O1 superfamily.</text>
</comment>
<dbReference type="SMR" id="P0DUA0"/>
<dbReference type="GO" id="GO:0005576">
    <property type="term" value="C:extracellular region"/>
    <property type="evidence" value="ECO:0007669"/>
    <property type="project" value="UniProtKB-SubCell"/>
</dbReference>
<dbReference type="GO" id="GO:0090729">
    <property type="term" value="F:toxin activity"/>
    <property type="evidence" value="ECO:0007669"/>
    <property type="project" value="UniProtKB-KW"/>
</dbReference>